<comment type="function">
    <text evidence="1">Catalyzes the formation of the alpha-1,6-glucosidic linkages in glycogen by scission of a 1,4-alpha-linked oligosaccharide from growing alpha-1,4-glucan chains and the subsequent attachment of the oligosaccharide to the alpha-1,6 position.</text>
</comment>
<comment type="catalytic activity">
    <reaction evidence="1">
        <text>Transfers a segment of a (1-&gt;4)-alpha-D-glucan chain to a primary hydroxy group in a similar glucan chain.</text>
        <dbReference type="EC" id="2.4.1.18"/>
    </reaction>
</comment>
<comment type="pathway">
    <text evidence="1">Glycan biosynthesis; glycogen biosynthesis.</text>
</comment>
<comment type="subunit">
    <text evidence="1">Monomer.</text>
</comment>
<comment type="similarity">
    <text evidence="1">Belongs to the glycosyl hydrolase 13 family. GlgB subfamily.</text>
</comment>
<gene>
    <name evidence="1" type="primary">glgB</name>
    <name type="ordered locus">CE1323</name>
</gene>
<evidence type="ECO:0000255" key="1">
    <source>
        <dbReference type="HAMAP-Rule" id="MF_00685"/>
    </source>
</evidence>
<reference key="1">
    <citation type="journal article" date="2003" name="Genome Res.">
        <title>Comparative complete genome sequence analysis of the amino acid replacements responsible for the thermostability of Corynebacterium efficiens.</title>
        <authorList>
            <person name="Nishio Y."/>
            <person name="Nakamura Y."/>
            <person name="Kawarabayasi Y."/>
            <person name="Usuda Y."/>
            <person name="Kimura E."/>
            <person name="Sugimoto S."/>
            <person name="Matsui K."/>
            <person name="Yamagishi A."/>
            <person name="Kikuchi H."/>
            <person name="Ikeo K."/>
            <person name="Gojobori T."/>
        </authorList>
    </citation>
    <scope>NUCLEOTIDE SEQUENCE [LARGE SCALE GENOMIC DNA]</scope>
    <source>
        <strain>DSM 44549 / YS-314 / AJ 12310 / JCM 11189 / NBRC 100395</strain>
    </source>
</reference>
<accession>Q8FQ12</accession>
<proteinExistence type="inferred from homology"/>
<feature type="chain" id="PRO_0000188698" description="1,4-alpha-glucan branching enzyme GlgB">
    <location>
        <begin position="1"/>
        <end position="731"/>
    </location>
</feature>
<feature type="active site" description="Nucleophile" evidence="1">
    <location>
        <position position="408"/>
    </location>
</feature>
<feature type="active site" description="Proton donor" evidence="1">
    <location>
        <position position="461"/>
    </location>
</feature>
<organism>
    <name type="scientific">Corynebacterium efficiens (strain DSM 44549 / YS-314 / AJ 12310 / JCM 11189 / NBRC 100395)</name>
    <dbReference type="NCBI Taxonomy" id="196164"/>
    <lineage>
        <taxon>Bacteria</taxon>
        <taxon>Bacillati</taxon>
        <taxon>Actinomycetota</taxon>
        <taxon>Actinomycetes</taxon>
        <taxon>Mycobacteriales</taxon>
        <taxon>Corynebacteriaceae</taxon>
        <taxon>Corynebacterium</taxon>
    </lineage>
</organism>
<dbReference type="EC" id="2.4.1.18" evidence="1"/>
<dbReference type="EMBL" id="BA000035">
    <property type="protein sequence ID" value="BAC18133.1"/>
    <property type="molecule type" value="Genomic_DNA"/>
</dbReference>
<dbReference type="RefSeq" id="WP_006769285.1">
    <property type="nucleotide sequence ID" value="NC_004369.1"/>
</dbReference>
<dbReference type="SMR" id="Q8FQ12"/>
<dbReference type="STRING" id="196164.gene:10741732"/>
<dbReference type="CAZy" id="CBM48">
    <property type="family name" value="Carbohydrate-Binding Module Family 48"/>
</dbReference>
<dbReference type="CAZy" id="GH13">
    <property type="family name" value="Glycoside Hydrolase Family 13"/>
</dbReference>
<dbReference type="KEGG" id="cef:CE1323"/>
<dbReference type="eggNOG" id="COG0296">
    <property type="taxonomic scope" value="Bacteria"/>
</dbReference>
<dbReference type="HOGENOM" id="CLU_004245_3_2_11"/>
<dbReference type="OrthoDB" id="9800174at2"/>
<dbReference type="UniPathway" id="UPA00164"/>
<dbReference type="Proteomes" id="UP000001409">
    <property type="component" value="Chromosome"/>
</dbReference>
<dbReference type="GO" id="GO:0005829">
    <property type="term" value="C:cytosol"/>
    <property type="evidence" value="ECO:0007669"/>
    <property type="project" value="TreeGrafter"/>
</dbReference>
<dbReference type="GO" id="GO:0003844">
    <property type="term" value="F:1,4-alpha-glucan branching enzyme activity"/>
    <property type="evidence" value="ECO:0007669"/>
    <property type="project" value="UniProtKB-UniRule"/>
</dbReference>
<dbReference type="GO" id="GO:0043169">
    <property type="term" value="F:cation binding"/>
    <property type="evidence" value="ECO:0007669"/>
    <property type="project" value="InterPro"/>
</dbReference>
<dbReference type="GO" id="GO:0004553">
    <property type="term" value="F:hydrolase activity, hydrolyzing O-glycosyl compounds"/>
    <property type="evidence" value="ECO:0007669"/>
    <property type="project" value="InterPro"/>
</dbReference>
<dbReference type="GO" id="GO:0005978">
    <property type="term" value="P:glycogen biosynthetic process"/>
    <property type="evidence" value="ECO:0007669"/>
    <property type="project" value="UniProtKB-UniRule"/>
</dbReference>
<dbReference type="CDD" id="cd11322">
    <property type="entry name" value="AmyAc_Glg_BE"/>
    <property type="match status" value="1"/>
</dbReference>
<dbReference type="CDD" id="cd02855">
    <property type="entry name" value="E_set_GBE_prok_N"/>
    <property type="match status" value="1"/>
</dbReference>
<dbReference type="FunFam" id="2.60.40.10:FF:000169">
    <property type="entry name" value="1,4-alpha-glucan branching enzyme GlgB"/>
    <property type="match status" value="1"/>
</dbReference>
<dbReference type="FunFam" id="3.20.20.80:FF:000003">
    <property type="entry name" value="1,4-alpha-glucan branching enzyme GlgB"/>
    <property type="match status" value="1"/>
</dbReference>
<dbReference type="Gene3D" id="3.20.20.80">
    <property type="entry name" value="Glycosidases"/>
    <property type="match status" value="1"/>
</dbReference>
<dbReference type="Gene3D" id="2.60.40.1180">
    <property type="entry name" value="Golgi alpha-mannosidase II"/>
    <property type="match status" value="1"/>
</dbReference>
<dbReference type="Gene3D" id="2.60.40.10">
    <property type="entry name" value="Immunoglobulins"/>
    <property type="match status" value="2"/>
</dbReference>
<dbReference type="HAMAP" id="MF_00685">
    <property type="entry name" value="GlgB"/>
    <property type="match status" value="1"/>
</dbReference>
<dbReference type="InterPro" id="IPR006048">
    <property type="entry name" value="A-amylase/branching_C"/>
</dbReference>
<dbReference type="InterPro" id="IPR037439">
    <property type="entry name" value="Branching_enzy"/>
</dbReference>
<dbReference type="InterPro" id="IPR006407">
    <property type="entry name" value="GlgB"/>
</dbReference>
<dbReference type="InterPro" id="IPR054169">
    <property type="entry name" value="GlgB_N"/>
</dbReference>
<dbReference type="InterPro" id="IPR044143">
    <property type="entry name" value="GlgB_N_E_set_prok"/>
</dbReference>
<dbReference type="InterPro" id="IPR006047">
    <property type="entry name" value="Glyco_hydro_13_cat_dom"/>
</dbReference>
<dbReference type="InterPro" id="IPR004193">
    <property type="entry name" value="Glyco_hydro_13_N"/>
</dbReference>
<dbReference type="InterPro" id="IPR013780">
    <property type="entry name" value="Glyco_hydro_b"/>
</dbReference>
<dbReference type="InterPro" id="IPR017853">
    <property type="entry name" value="Glycoside_hydrolase_SF"/>
</dbReference>
<dbReference type="InterPro" id="IPR013783">
    <property type="entry name" value="Ig-like_fold"/>
</dbReference>
<dbReference type="InterPro" id="IPR014756">
    <property type="entry name" value="Ig_E-set"/>
</dbReference>
<dbReference type="NCBIfam" id="TIGR01515">
    <property type="entry name" value="branching_enzym"/>
    <property type="match status" value="1"/>
</dbReference>
<dbReference type="NCBIfam" id="NF003811">
    <property type="entry name" value="PRK05402.1"/>
    <property type="match status" value="1"/>
</dbReference>
<dbReference type="NCBIfam" id="NF008967">
    <property type="entry name" value="PRK12313.1"/>
    <property type="match status" value="1"/>
</dbReference>
<dbReference type="PANTHER" id="PTHR43651">
    <property type="entry name" value="1,4-ALPHA-GLUCAN-BRANCHING ENZYME"/>
    <property type="match status" value="1"/>
</dbReference>
<dbReference type="PANTHER" id="PTHR43651:SF3">
    <property type="entry name" value="1,4-ALPHA-GLUCAN-BRANCHING ENZYME"/>
    <property type="match status" value="1"/>
</dbReference>
<dbReference type="Pfam" id="PF00128">
    <property type="entry name" value="Alpha-amylase"/>
    <property type="match status" value="2"/>
</dbReference>
<dbReference type="Pfam" id="PF02806">
    <property type="entry name" value="Alpha-amylase_C"/>
    <property type="match status" value="1"/>
</dbReference>
<dbReference type="Pfam" id="PF02922">
    <property type="entry name" value="CBM_48"/>
    <property type="match status" value="1"/>
</dbReference>
<dbReference type="Pfam" id="PF22019">
    <property type="entry name" value="GlgB_N"/>
    <property type="match status" value="1"/>
</dbReference>
<dbReference type="PIRSF" id="PIRSF000463">
    <property type="entry name" value="GlgB"/>
    <property type="match status" value="1"/>
</dbReference>
<dbReference type="SMART" id="SM00642">
    <property type="entry name" value="Aamy"/>
    <property type="match status" value="1"/>
</dbReference>
<dbReference type="SUPFAM" id="SSF51445">
    <property type="entry name" value="(Trans)glycosidases"/>
    <property type="match status" value="1"/>
</dbReference>
<dbReference type="SUPFAM" id="SSF81296">
    <property type="entry name" value="E set domains"/>
    <property type="match status" value="2"/>
</dbReference>
<dbReference type="SUPFAM" id="SSF51011">
    <property type="entry name" value="Glycosyl hydrolase domain"/>
    <property type="match status" value="1"/>
</dbReference>
<name>GLGB_COREF</name>
<keyword id="KW-0119">Carbohydrate metabolism</keyword>
<keyword id="KW-0320">Glycogen biosynthesis</keyword>
<keyword id="KW-0321">Glycogen metabolism</keyword>
<keyword id="KW-0328">Glycosyltransferase</keyword>
<keyword id="KW-1185">Reference proteome</keyword>
<keyword id="KW-0808">Transferase</keyword>
<sequence>MTPASANDLLIPEEDLNRLRHCHHHNPHGFYGWHATDDGSVIRTRQIGAEKVELVLGDTQIVMNPIGDDIFAIKLGNREAFDYRLRVTWPGQDPVVTADPYIFLPTLGEMDTYLISEGRHERLWDVLGANVKTYETTLGQVRGTAFAVWAPNAIGVAVIGGFNGWNASQHAMRSLGGSGIWELFIPNIGPGEVYKFAIQTREGHRRDKADPMARLAELPPATGSIVVESDYQWQDSEWMDKRAEIDTATTPMSVYEVHLGSWRWGRSYAELATELVDYVADLGYTHVEFMPVAEHPFGGSWGYQVSGYYAPTSRWGSPDELRKLIDAFHARGIGVIIDWVPAHFPKDDWALARFDGQALYEHPDWRRGEQKDWGTYVFNFGRSEVRNFLVANALYWLEEFHVDGLRVDAVASMLYLDYSREHGEWEPNVYGGRENLEAVQFLQEMNATVQRVHPGALTIAEESTSWPGVTAPTWDGGLGFSLKWNMGWMNDTLEYFSKDPIHRSFHHNELTFSLVYAFSERFVLPISHDEVVHGKGSLWNRMPGDTWNKAAGMRTLLAYMWAHPGKKLLFMGQEIGQRDEWSEAHELPWGVVEGWQGEYHEGISDLVRELNSTYKEVTALHQRDFSGEGFTWNKADDASNNILVFTRHGDDGSQALCVFNLSGTSQPEYQIGVSGGGSWRLVLNTDDEQYHGANNPLPETIEAEKIDRDGFPYTTTLHSPAMSAQFYVWEG</sequence>
<protein>
    <recommendedName>
        <fullName evidence="1">1,4-alpha-glucan branching enzyme GlgB</fullName>
        <ecNumber evidence="1">2.4.1.18</ecNumber>
    </recommendedName>
    <alternativeName>
        <fullName evidence="1">1,4-alpha-D-glucan:1,4-alpha-D-glucan 6-glucosyl-transferase</fullName>
    </alternativeName>
    <alternativeName>
        <fullName evidence="1">Alpha-(1-&gt;4)-glucan branching enzyme</fullName>
    </alternativeName>
    <alternativeName>
        <fullName evidence="1">Glycogen branching enzyme</fullName>
        <shortName evidence="1">BE</shortName>
    </alternativeName>
</protein>